<reference key="1">
    <citation type="submission" date="2003-10" db="EMBL/GenBank/DDBJ databases">
        <authorList>
            <consortium name="NIH - Xenopus Gene Collection (XGC) project"/>
        </authorList>
    </citation>
    <scope>NUCLEOTIDE SEQUENCE [LARGE SCALE MRNA] (ISOFORMS 1 AND 2)</scope>
    <source>
        <tissue>Kidney</tissue>
    </source>
</reference>
<feature type="chain" id="PRO_0000305283" description="Axin interactor, dorsalization-associated protein B">
    <location>
        <begin position="1"/>
        <end position="305"/>
    </location>
</feature>
<feature type="domain" description="C2 Aida-type" evidence="2">
    <location>
        <begin position="156"/>
        <end position="303"/>
    </location>
</feature>
<feature type="region of interest" description="Disordered" evidence="3">
    <location>
        <begin position="126"/>
        <end position="146"/>
    </location>
</feature>
<feature type="region of interest" description="Axin-binding" evidence="1">
    <location>
        <begin position="153"/>
        <end position="220"/>
    </location>
</feature>
<feature type="compositionally biased region" description="Acidic residues" evidence="3">
    <location>
        <begin position="126"/>
        <end position="137"/>
    </location>
</feature>
<feature type="splice variant" id="VSP_028324" description="In isoform 2." evidence="4">
    <original>P</original>
    <variation>PGAIQ</variation>
    <location>
        <position position="152"/>
    </location>
</feature>
<feature type="sequence conflict" description="In Ref. 1; AAI06287." evidence="5" ref="1">
    <original>I</original>
    <variation>V</variation>
    <location>
        <position position="100"/>
    </location>
</feature>
<feature type="sequence conflict" description="In Ref. 1; AAI06287." evidence="5" ref="1">
    <original>A</original>
    <variation>V</variation>
    <location>
        <position position="141"/>
    </location>
</feature>
<feature type="sequence conflict" description="In Ref. 1; AAI06287." evidence="5" ref="1">
    <original>R</original>
    <variation>K</variation>
    <location>
        <position position="266"/>
    </location>
</feature>
<evidence type="ECO:0000250" key="1"/>
<evidence type="ECO:0000255" key="2">
    <source>
        <dbReference type="PROSITE-ProRule" id="PRU01259"/>
    </source>
</evidence>
<evidence type="ECO:0000256" key="3">
    <source>
        <dbReference type="SAM" id="MobiDB-lite"/>
    </source>
</evidence>
<evidence type="ECO:0000303" key="4">
    <source ref="1"/>
</evidence>
<evidence type="ECO:0000305" key="5"/>
<name>AIDAB_XENLA</name>
<gene>
    <name type="primary">aida-b</name>
</gene>
<sequence length="305" mass="34636">MSDMNKILQKWGASLRKGTDFDSWGQLVEAIDEYQILARQLQKEAQSPANSSDFTEDQKKTIGKIATCLELRSAALQYTQSQEGFTLEDVKKLEPILSSILTFNKEFPFDVQPVPLRRILAPGEEENLEVEEEEEDGGAGAGSPDLFPARVPGTLLPRLPSEPGMTLLTIKIEKIGLKDAGQCIDPYITVSVKDLNGIDLTPVQDTPMAVRKEDTYVHFNVEIEIQKHVEKLTKGAAIFFEFKHYKPKKRFTSTKCFAFMEMDEIRSGQIVIELYKKPTDFKRKRLQLLTKKPLYLHLLQTLLKD</sequence>
<keyword id="KW-0025">Alternative splicing</keyword>
<keyword id="KW-0217">Developmental protein</keyword>
<keyword id="KW-1185">Reference proteome</keyword>
<accession>Q6PB19</accession>
<accession>Q3KQB8</accession>
<dbReference type="EMBL" id="BC059964">
    <property type="protein sequence ID" value="AAH59964.1"/>
    <property type="molecule type" value="mRNA"/>
</dbReference>
<dbReference type="EMBL" id="BC106286">
    <property type="protein sequence ID" value="AAI06287.1"/>
    <property type="molecule type" value="mRNA"/>
</dbReference>
<dbReference type="RefSeq" id="NP_001083295.1">
    <property type="nucleotide sequence ID" value="NM_001089826.1"/>
</dbReference>
<dbReference type="SMR" id="Q6PB19"/>
<dbReference type="DNASU" id="398850"/>
<dbReference type="AGR" id="Xenbase:XB-GENE-6255156"/>
<dbReference type="Xenbase" id="XB-GENE-6255156">
    <property type="gene designation" value="aida.S"/>
</dbReference>
<dbReference type="Proteomes" id="UP000186698">
    <property type="component" value="Unplaced"/>
</dbReference>
<dbReference type="Bgee" id="398850">
    <property type="expression patterns" value="Expressed in testis and 19 other cell types or tissues"/>
</dbReference>
<dbReference type="GO" id="GO:0016020">
    <property type="term" value="C:membrane"/>
    <property type="evidence" value="ECO:0000318"/>
    <property type="project" value="GO_Central"/>
</dbReference>
<dbReference type="GO" id="GO:0035091">
    <property type="term" value="F:phosphatidylinositol binding"/>
    <property type="evidence" value="ECO:0000318"/>
    <property type="project" value="GO_Central"/>
</dbReference>
<dbReference type="GO" id="GO:0048264">
    <property type="term" value="P:determination of ventral identity"/>
    <property type="evidence" value="ECO:0000318"/>
    <property type="project" value="GO_Central"/>
</dbReference>
<dbReference type="GO" id="GO:0009953">
    <property type="term" value="P:dorsal/ventral pattern formation"/>
    <property type="evidence" value="ECO:0000250"/>
    <property type="project" value="UniProtKB"/>
</dbReference>
<dbReference type="GO" id="GO:0046329">
    <property type="term" value="P:negative regulation of JNK cascade"/>
    <property type="evidence" value="ECO:0000250"/>
    <property type="project" value="UniProtKB"/>
</dbReference>
<dbReference type="GO" id="GO:0031333">
    <property type="term" value="P:negative regulation of protein-containing complex assembly"/>
    <property type="evidence" value="ECO:0000250"/>
    <property type="project" value="UniProtKB"/>
</dbReference>
<dbReference type="FunFam" id="1.20.120.360:FF:000001">
    <property type="entry name" value="Axin interactor, dorsalization-associated protein"/>
    <property type="match status" value="1"/>
</dbReference>
<dbReference type="FunFam" id="2.60.40.150:FF:000059">
    <property type="entry name" value="Axin interactor, dorsalization-associated protein"/>
    <property type="match status" value="1"/>
</dbReference>
<dbReference type="Gene3D" id="1.20.120.360">
    <property type="entry name" value="Axin interactor, dorsalization-associated protein, N-terminal domain"/>
    <property type="match status" value="1"/>
</dbReference>
<dbReference type="Gene3D" id="2.60.40.150">
    <property type="entry name" value="C2 domain"/>
    <property type="match status" value="1"/>
</dbReference>
<dbReference type="InterPro" id="IPR025939">
    <property type="entry name" value="Aida_C"/>
</dbReference>
<dbReference type="InterPro" id="IPR023421">
    <property type="entry name" value="AIDA_N"/>
</dbReference>
<dbReference type="InterPro" id="IPR036818">
    <property type="entry name" value="AIDA_N_sf"/>
</dbReference>
<dbReference type="InterPro" id="IPR035892">
    <property type="entry name" value="C2_domain_sf"/>
</dbReference>
<dbReference type="PANTHER" id="PTHR28654">
    <property type="entry name" value="AXIN INTERACTOR, DORSALIZATION-ASSOCIATED PROTEIN"/>
    <property type="match status" value="1"/>
</dbReference>
<dbReference type="PANTHER" id="PTHR28654:SF1">
    <property type="entry name" value="AXIN INTERACTOR, DORSALIZATION-ASSOCIATED PROTEIN"/>
    <property type="match status" value="1"/>
</dbReference>
<dbReference type="Pfam" id="PF14186">
    <property type="entry name" value="Aida_C2"/>
    <property type="match status" value="1"/>
</dbReference>
<dbReference type="Pfam" id="PF08910">
    <property type="entry name" value="Aida_N"/>
    <property type="match status" value="1"/>
</dbReference>
<dbReference type="SUPFAM" id="SSF109779">
    <property type="entry name" value="Domain from hypothetical 2610208m17rik protein"/>
    <property type="match status" value="1"/>
</dbReference>
<dbReference type="PROSITE" id="PS51911">
    <property type="entry name" value="C2_AIDA"/>
    <property type="match status" value="1"/>
</dbReference>
<comment type="function">
    <text evidence="1">Acts as a ventralizing factor during embryogenesis. Inhibits axin-mediated JNK activation by binding axin and disrupting axin homodimerization. This in turn antagonizes a Wnt/beta-catenin-independent dorsalization pathway activated by axin/JNK-signaling (By similarity).</text>
</comment>
<comment type="alternative products">
    <event type="alternative splicing"/>
    <isoform>
        <id>Q6PB19-1</id>
        <name>1</name>
        <sequence type="displayed"/>
    </isoform>
    <isoform>
        <id>Q6PB19-2</id>
        <name>2</name>
        <sequence type="described" ref="VSP_028324"/>
    </isoform>
</comment>
<comment type="similarity">
    <text evidence="2 5">Belongs to the AIDA family.</text>
</comment>
<organism>
    <name type="scientific">Xenopus laevis</name>
    <name type="common">African clawed frog</name>
    <dbReference type="NCBI Taxonomy" id="8355"/>
    <lineage>
        <taxon>Eukaryota</taxon>
        <taxon>Metazoa</taxon>
        <taxon>Chordata</taxon>
        <taxon>Craniata</taxon>
        <taxon>Vertebrata</taxon>
        <taxon>Euteleostomi</taxon>
        <taxon>Amphibia</taxon>
        <taxon>Batrachia</taxon>
        <taxon>Anura</taxon>
        <taxon>Pipoidea</taxon>
        <taxon>Pipidae</taxon>
        <taxon>Xenopodinae</taxon>
        <taxon>Xenopus</taxon>
        <taxon>Xenopus</taxon>
    </lineage>
</organism>
<protein>
    <recommendedName>
        <fullName>Axin interactor, dorsalization-associated protein B</fullName>
    </recommendedName>
    <alternativeName>
        <fullName>Axin interaction partner and dorsalization antagonist B</fullName>
    </alternativeName>
</protein>
<proteinExistence type="evidence at transcript level"/>